<reference key="1">
    <citation type="journal article" date="2005" name="Science">
        <title>Extensive DNA inversions in the B. fragilis genome control variable gene expression.</title>
        <authorList>
            <person name="Cerdeno-Tarraga A.-M."/>
            <person name="Patrick S."/>
            <person name="Crossman L.C."/>
            <person name="Blakely G."/>
            <person name="Abratt V."/>
            <person name="Lennard N."/>
            <person name="Poxton I."/>
            <person name="Duerden B."/>
            <person name="Harris B."/>
            <person name="Quail M.A."/>
            <person name="Barron A."/>
            <person name="Clark L."/>
            <person name="Corton C."/>
            <person name="Doggett J."/>
            <person name="Holden M.T.G."/>
            <person name="Larke N."/>
            <person name="Line A."/>
            <person name="Lord A."/>
            <person name="Norbertczak H."/>
            <person name="Ormond D."/>
            <person name="Price C."/>
            <person name="Rabbinowitsch E."/>
            <person name="Woodward J."/>
            <person name="Barrell B.G."/>
            <person name="Parkhill J."/>
        </authorList>
    </citation>
    <scope>NUCLEOTIDE SEQUENCE [LARGE SCALE GENOMIC DNA]</scope>
    <source>
        <strain>ATCC 25285 / DSM 2151 / CCUG 4856 / JCM 11019 / LMG 10263 / NCTC 9343 / Onslow / VPI 2553 / EN-2</strain>
    </source>
</reference>
<proteinExistence type="inferred from homology"/>
<dbReference type="EMBL" id="CR626927">
    <property type="protein sequence ID" value="CAH09651.1"/>
    <property type="molecule type" value="Genomic_DNA"/>
</dbReference>
<dbReference type="RefSeq" id="WP_005791577.1">
    <property type="nucleotide sequence ID" value="NZ_UFTH01000001.1"/>
</dbReference>
<dbReference type="SMR" id="Q5L8D7"/>
<dbReference type="PaxDb" id="272559-BF9343_3870"/>
<dbReference type="GeneID" id="60369268"/>
<dbReference type="KEGG" id="bfs:BF9343_3870"/>
<dbReference type="eggNOG" id="COG0203">
    <property type="taxonomic scope" value="Bacteria"/>
</dbReference>
<dbReference type="HOGENOM" id="CLU_074407_0_1_10"/>
<dbReference type="Proteomes" id="UP000006731">
    <property type="component" value="Chromosome"/>
</dbReference>
<dbReference type="GO" id="GO:0022625">
    <property type="term" value="C:cytosolic large ribosomal subunit"/>
    <property type="evidence" value="ECO:0007669"/>
    <property type="project" value="TreeGrafter"/>
</dbReference>
<dbReference type="GO" id="GO:0003735">
    <property type="term" value="F:structural constituent of ribosome"/>
    <property type="evidence" value="ECO:0007669"/>
    <property type="project" value="InterPro"/>
</dbReference>
<dbReference type="GO" id="GO:0006412">
    <property type="term" value="P:translation"/>
    <property type="evidence" value="ECO:0007669"/>
    <property type="project" value="UniProtKB-UniRule"/>
</dbReference>
<dbReference type="FunFam" id="3.90.1030.10:FF:000006">
    <property type="entry name" value="50S ribosomal protein L17"/>
    <property type="match status" value="1"/>
</dbReference>
<dbReference type="Gene3D" id="3.90.1030.10">
    <property type="entry name" value="Ribosomal protein L17"/>
    <property type="match status" value="1"/>
</dbReference>
<dbReference type="HAMAP" id="MF_01368">
    <property type="entry name" value="Ribosomal_bL17"/>
    <property type="match status" value="1"/>
</dbReference>
<dbReference type="InterPro" id="IPR000456">
    <property type="entry name" value="Ribosomal_bL17"/>
</dbReference>
<dbReference type="InterPro" id="IPR047859">
    <property type="entry name" value="Ribosomal_bL17_CS"/>
</dbReference>
<dbReference type="InterPro" id="IPR036373">
    <property type="entry name" value="Ribosomal_bL17_sf"/>
</dbReference>
<dbReference type="NCBIfam" id="TIGR00059">
    <property type="entry name" value="L17"/>
    <property type="match status" value="1"/>
</dbReference>
<dbReference type="PANTHER" id="PTHR14413:SF16">
    <property type="entry name" value="LARGE RIBOSOMAL SUBUNIT PROTEIN BL17M"/>
    <property type="match status" value="1"/>
</dbReference>
<dbReference type="PANTHER" id="PTHR14413">
    <property type="entry name" value="RIBOSOMAL PROTEIN L17"/>
    <property type="match status" value="1"/>
</dbReference>
<dbReference type="Pfam" id="PF01196">
    <property type="entry name" value="Ribosomal_L17"/>
    <property type="match status" value="1"/>
</dbReference>
<dbReference type="SUPFAM" id="SSF64263">
    <property type="entry name" value="Prokaryotic ribosomal protein L17"/>
    <property type="match status" value="1"/>
</dbReference>
<dbReference type="PROSITE" id="PS01167">
    <property type="entry name" value="RIBOSOMAL_L17"/>
    <property type="match status" value="1"/>
</dbReference>
<gene>
    <name evidence="1" type="primary">rplQ</name>
    <name type="ordered locus">BF3975</name>
</gene>
<evidence type="ECO:0000255" key="1">
    <source>
        <dbReference type="HAMAP-Rule" id="MF_01368"/>
    </source>
</evidence>
<evidence type="ECO:0000256" key="2">
    <source>
        <dbReference type="SAM" id="MobiDB-lite"/>
    </source>
</evidence>
<evidence type="ECO:0000305" key="3"/>
<feature type="chain" id="PRO_0000267829" description="Large ribosomal subunit protein bL17">
    <location>
        <begin position="1"/>
        <end position="161"/>
    </location>
</feature>
<feature type="region of interest" description="Disordered" evidence="2">
    <location>
        <begin position="126"/>
        <end position="161"/>
    </location>
</feature>
<feature type="compositionally biased region" description="Basic residues" evidence="2">
    <location>
        <begin position="129"/>
        <end position="138"/>
    </location>
</feature>
<feature type="compositionally biased region" description="Low complexity" evidence="2">
    <location>
        <begin position="142"/>
        <end position="152"/>
    </location>
</feature>
<organism>
    <name type="scientific">Bacteroides fragilis (strain ATCC 25285 / DSM 2151 / CCUG 4856 / JCM 11019 / LMG 10263 / NCTC 9343 / Onslow / VPI 2553 / EN-2)</name>
    <dbReference type="NCBI Taxonomy" id="272559"/>
    <lineage>
        <taxon>Bacteria</taxon>
        <taxon>Pseudomonadati</taxon>
        <taxon>Bacteroidota</taxon>
        <taxon>Bacteroidia</taxon>
        <taxon>Bacteroidales</taxon>
        <taxon>Bacteroidaceae</taxon>
        <taxon>Bacteroides</taxon>
    </lineage>
</organism>
<keyword id="KW-0687">Ribonucleoprotein</keyword>
<keyword id="KW-0689">Ribosomal protein</keyword>
<name>RL17_BACFN</name>
<accession>Q5L8D7</accession>
<comment type="subunit">
    <text evidence="1">Part of the 50S ribosomal subunit. Contacts protein L32.</text>
</comment>
<comment type="similarity">
    <text evidence="1">Belongs to the bacterial ribosomal protein bL17 family.</text>
</comment>
<sequence>MRHNKKFNHLGRTASHRSAMLSNMACSLIKHKRITTTVAKAKALKKFVEPLITKSKEDTTNSRRVVFSNLQDKLAVTELFKEISVKIADRPGGYTRIIKTGNRLGDNAEMCFIELVDYNENMAKEKVAKKATRTRRSKKTTEAAPAAEVPATEEPKAESAE</sequence>
<protein>
    <recommendedName>
        <fullName evidence="1">Large ribosomal subunit protein bL17</fullName>
    </recommendedName>
    <alternativeName>
        <fullName evidence="3">50S ribosomal protein L17</fullName>
    </alternativeName>
</protein>